<comment type="function">
    <text evidence="1">Transfers N-acetylgalactosamine (GalNAc) from UDP-GalNAc to N-acetylglucosamine-beta-benzyl with a beta-1,4-linkage to form N,N'-diacetyllactosediamine, GalNAc-beta-1,4-GlcNAc structures in N-linked glycans and probably O-linked glycans. Mediates the N,N'-diacetyllactosediamine formation on gastric mucosa (By similarity).</text>
</comment>
<comment type="catalytic activity">
    <reaction>
        <text>an N-acetyl-beta-D-glucosaminyl derivative + UDP-N-acetyl-alpha-D-galactosamine = an N-acetyl-beta-D-galactosaminyl-(1-&gt;4)-N-acetyl-beta-D-glucosaminyl derivative + UDP + H(+)</text>
        <dbReference type="Rhea" id="RHEA:20493"/>
        <dbReference type="ChEBI" id="CHEBI:15378"/>
        <dbReference type="ChEBI" id="CHEBI:58223"/>
        <dbReference type="ChEBI" id="CHEBI:61631"/>
        <dbReference type="ChEBI" id="CHEBI:67138"/>
        <dbReference type="ChEBI" id="CHEBI:138027"/>
        <dbReference type="EC" id="2.4.1.244"/>
    </reaction>
</comment>
<comment type="subcellular location">
    <subcellularLocation>
        <location>Golgi apparatus</location>
        <location>Golgi stack membrane</location>
        <topology>Single-pass type II membrane protein</topology>
    </subcellularLocation>
    <text evidence="1">Localizes to apical Golgi.</text>
</comment>
<comment type="similarity">
    <text evidence="5">Belongs to the chondroitin N-acetylgalactosaminyltransferase family.</text>
</comment>
<comment type="online information" name="Functional Glycomics Gateway - GTase">
    <link uri="http://www.functionalglycomics.org/glycomics/search/jsp/landing.jsp?query=gt_mou_507"/>
    <text>Beta1,4-N-acetylgalactosaminyltransferase III</text>
</comment>
<reference key="1">
    <citation type="journal article" date="2003" name="J. Biol. Chem.">
        <title>Molecular cloning and characterization of a novel human beta 1,4-N-acetylgalactosaminyltransferase, beta 4GalNAc-T3, responsible for the synthesis of N,N'-diacetyllactosediamine, galNAc beta 1-4GlcNAc.</title>
        <authorList>
            <person name="Sato T."/>
            <person name="Gotoh M."/>
            <person name="Kiyohara K."/>
            <person name="Kameyama A."/>
            <person name="Kubota T."/>
            <person name="Kikuchi N."/>
            <person name="Ishizuka Y."/>
            <person name="Iwasaki H."/>
            <person name="Togayachi A."/>
            <person name="Kudo T."/>
            <person name="Ohkura T."/>
            <person name="Nakanishi H."/>
            <person name="Narimatsu H."/>
        </authorList>
    </citation>
    <scope>NUCLEOTIDE SEQUENCE [MRNA]</scope>
</reference>
<proteinExistence type="evidence at transcript level"/>
<keyword id="KW-0328">Glycosyltransferase</keyword>
<keyword id="KW-0333">Golgi apparatus</keyword>
<keyword id="KW-0472">Membrane</keyword>
<keyword id="KW-1185">Reference proteome</keyword>
<keyword id="KW-0735">Signal-anchor</keyword>
<keyword id="KW-0808">Transferase</keyword>
<keyword id="KW-0812">Transmembrane</keyword>
<keyword id="KW-1133">Transmembrane helix</keyword>
<organism>
    <name type="scientific">Mus musculus</name>
    <name type="common">Mouse</name>
    <dbReference type="NCBI Taxonomy" id="10090"/>
    <lineage>
        <taxon>Eukaryota</taxon>
        <taxon>Metazoa</taxon>
        <taxon>Chordata</taxon>
        <taxon>Craniata</taxon>
        <taxon>Vertebrata</taxon>
        <taxon>Euteleostomi</taxon>
        <taxon>Mammalia</taxon>
        <taxon>Eutheria</taxon>
        <taxon>Euarchontoglires</taxon>
        <taxon>Glires</taxon>
        <taxon>Rodentia</taxon>
        <taxon>Myomorpha</taxon>
        <taxon>Muroidea</taxon>
        <taxon>Muridae</taxon>
        <taxon>Murinae</taxon>
        <taxon>Mus</taxon>
        <taxon>Mus</taxon>
    </lineage>
</organism>
<gene>
    <name type="primary">B4galnt3</name>
</gene>
<accession>Q6L8S8</accession>
<name>B4GN3_MOUSE</name>
<sequence length="986" mass="113509">MGSPRAALLMLLLRPIKLLRRRFRLLLLLAVVSVGLWTLYLELVASAQAGGNPLNHRYGSWRELAKALASRNIPAVDPNLQFYRPQRLSLKDQEIARSRSRNSSYLKWNKPVPWLSEFRGHANLHVFEDWCGSSIQQLRNNLHFPLYPHIRTTLRKLAVSPKWTNYGLRIFGYLHPFTDGKIQFAIAADDNAEFWLSRDDQVSGLQLLASVGKTGKEWTAPGEFGKFQSQISKPVSLSASLRYYFEVLHKQNDEGTDHVEVAWRRNDPGAKFTIIDSPFLSLFTNETILRMDEVGHIPQTAASHVGSSNTPPRDEQPPADMLRPDPRDTLFRVPLIAKSHLRHVLPDCPYKPSYLVDGLPLQRYQGLRFVHLSFVYPNDYTRLSHMETHNKCFYQESAYDQDRSSFQEYIKMDKPEKHGPEQPAGLEDGLLEESQYEDVPEEIPTSQDQNTGIQGRKQKTISTPGLGVTDYHLRKLLARSQSGPVAPLSKQNSTTAFPTRTSNIPVQRPEKSPVPSRDLSHSDQGARRNLPLIQRARPTGDRPGKTLEQSQWLNQVESFIAEQRRGDRIEPPTPSRGWRPEEDVVIAADQEGEVEEEEEGEDEEEDMSEVFEYVPMFDPVVNWGQTFSAQNLDFQALRTDWIDLNCNTSGNLLLPEQEALEVTRVFLRKLSQRTRGRYQLQRIVNVEKRQDRLRGGRYFLELELLDGQRLVRLSEYVSTRGWRGGDHPGREDTEARNLQGLVWSPRNRHRHVLNAQDPEPKLCWPQGFSWNHRAVVHFIVPVKNQARWVQQFIRDMESLSQVTGDAHFSIIITDYSSEDMDVEMALKRSRLRSYQYLKLSGNFERSAGLQAGIDLVKDPHSIIFLCDLHIHFPAGIIDTIRKHCVEGKMAFAPMVMRLHCGATPQWPEGYWEVNGFGLLGIYKSDLDKIGGMNTKEFRDRWGGEDWELLDRILQAGLEVERLSLRNFFHHFHSKRGMWNRRQMKMP</sequence>
<protein>
    <recommendedName>
        <fullName>Beta-1,4-N-acetylgalactosaminyltransferase 3</fullName>
        <shortName>Beta4GalNAc-T3</shortName>
        <shortName>Beta4GalNAcT3</shortName>
        <ecNumber>2.4.1.244</ecNumber>
    </recommendedName>
    <alternativeName>
        <fullName>Beta-1,4-N-acetylgalactosaminyltransferase III</fullName>
    </alternativeName>
    <alternativeName>
        <fullName>N-acetyl-beta-glucosaminyl-glycoprotein 4-beta-N-acetylgalactosaminyltransferase 2</fullName>
        <shortName>NGalNAc-T2</shortName>
    </alternativeName>
</protein>
<feature type="chain" id="PRO_0000252369" description="Beta-1,4-N-acetylgalactosaminyltransferase 3">
    <location>
        <begin position="1"/>
        <end position="986"/>
    </location>
</feature>
<feature type="topological domain" description="Cytoplasmic" evidence="2">
    <location>
        <begin position="1"/>
        <end position="24"/>
    </location>
</feature>
<feature type="transmembrane region" description="Helical; Signal-anchor for type II membrane protein" evidence="2">
    <location>
        <begin position="25"/>
        <end position="45"/>
    </location>
</feature>
<feature type="topological domain" description="Lumenal" evidence="2">
    <location>
        <begin position="46"/>
        <end position="986"/>
    </location>
</feature>
<feature type="domain" description="PA14" evidence="3">
    <location>
        <begin position="109"/>
        <end position="278"/>
    </location>
</feature>
<feature type="region of interest" description="Disordered" evidence="4">
    <location>
        <begin position="301"/>
        <end position="324"/>
    </location>
</feature>
<feature type="region of interest" description="Disordered" evidence="4">
    <location>
        <begin position="434"/>
        <end position="466"/>
    </location>
</feature>
<feature type="region of interest" description="Disordered" evidence="4">
    <location>
        <begin position="481"/>
        <end position="552"/>
    </location>
</feature>
<feature type="compositionally biased region" description="Polar residues" evidence="4">
    <location>
        <begin position="301"/>
        <end position="311"/>
    </location>
</feature>
<feature type="compositionally biased region" description="Basic and acidic residues" evidence="4">
    <location>
        <begin position="312"/>
        <end position="324"/>
    </location>
</feature>
<feature type="compositionally biased region" description="Polar residues" evidence="4">
    <location>
        <begin position="444"/>
        <end position="453"/>
    </location>
</feature>
<feature type="compositionally biased region" description="Polar residues" evidence="4">
    <location>
        <begin position="481"/>
        <end position="505"/>
    </location>
</feature>
<dbReference type="EC" id="2.4.1.244"/>
<dbReference type="EMBL" id="AB114826">
    <property type="protein sequence ID" value="BAD02450.1"/>
    <property type="molecule type" value="mRNA"/>
</dbReference>
<dbReference type="CCDS" id="CCDS20480.1"/>
<dbReference type="RefSeq" id="NP_942585.1">
    <property type="nucleotide sequence ID" value="NM_198884.2"/>
</dbReference>
<dbReference type="SMR" id="Q6L8S8"/>
<dbReference type="FunCoup" id="Q6L8S8">
    <property type="interactions" value="964"/>
</dbReference>
<dbReference type="STRING" id="10090.ENSMUSP00000058253"/>
<dbReference type="CAZy" id="GT7">
    <property type="family name" value="Glycosyltransferase Family 7"/>
</dbReference>
<dbReference type="iPTMnet" id="Q6L8S8"/>
<dbReference type="PhosphoSitePlus" id="Q6L8S8"/>
<dbReference type="PaxDb" id="10090-ENSMUSP00000058253"/>
<dbReference type="ProteomicsDB" id="277170"/>
<dbReference type="Antibodypedia" id="2483">
    <property type="antibodies" value="82 antibodies from 15 providers"/>
</dbReference>
<dbReference type="DNASU" id="330406"/>
<dbReference type="Ensembl" id="ENSMUST00000057283.8">
    <property type="protein sequence ID" value="ENSMUSP00000058253.8"/>
    <property type="gene ID" value="ENSMUSG00000041372.11"/>
</dbReference>
<dbReference type="GeneID" id="330406"/>
<dbReference type="KEGG" id="mmu:330406"/>
<dbReference type="UCSC" id="uc009dmy.1">
    <property type="organism name" value="mouse"/>
</dbReference>
<dbReference type="AGR" id="MGI:3041155"/>
<dbReference type="CTD" id="283358"/>
<dbReference type="MGI" id="MGI:3041155">
    <property type="gene designation" value="B4galnt3"/>
</dbReference>
<dbReference type="VEuPathDB" id="HostDB:ENSMUSG00000041372"/>
<dbReference type="eggNOG" id="KOG3588">
    <property type="taxonomic scope" value="Eukaryota"/>
</dbReference>
<dbReference type="GeneTree" id="ENSGT01050000244857"/>
<dbReference type="HOGENOM" id="CLU_011195_0_0_1"/>
<dbReference type="InParanoid" id="Q6L8S8"/>
<dbReference type="OMA" id="VDPHLQF"/>
<dbReference type="OrthoDB" id="5971499at2759"/>
<dbReference type="PhylomeDB" id="Q6L8S8"/>
<dbReference type="TreeFam" id="TF318303"/>
<dbReference type="BioGRID-ORCS" id="330406">
    <property type="hits" value="4 hits in 77 CRISPR screens"/>
</dbReference>
<dbReference type="ChiTaRS" id="B4galnt3">
    <property type="organism name" value="mouse"/>
</dbReference>
<dbReference type="PRO" id="PR:Q6L8S8"/>
<dbReference type="Proteomes" id="UP000000589">
    <property type="component" value="Chromosome 6"/>
</dbReference>
<dbReference type="RNAct" id="Q6L8S8">
    <property type="molecule type" value="protein"/>
</dbReference>
<dbReference type="Bgee" id="ENSMUSG00000041372">
    <property type="expression patterns" value="Expressed in olfactory epithelium and 51 other cell types or tissues"/>
</dbReference>
<dbReference type="ExpressionAtlas" id="Q6L8S8">
    <property type="expression patterns" value="baseline and differential"/>
</dbReference>
<dbReference type="GO" id="GO:0032580">
    <property type="term" value="C:Golgi cisterna membrane"/>
    <property type="evidence" value="ECO:0007669"/>
    <property type="project" value="UniProtKB-SubCell"/>
</dbReference>
<dbReference type="GO" id="GO:0008376">
    <property type="term" value="F:acetylgalactosaminyltransferase activity"/>
    <property type="evidence" value="ECO:0000250"/>
    <property type="project" value="HGNC-UCL"/>
</dbReference>
<dbReference type="GO" id="GO:0047238">
    <property type="term" value="F:glucuronosyl-N-acetylgalactosaminyl-proteoglycan 4-beta-N-acetylgalactosaminyltransferase activity"/>
    <property type="evidence" value="ECO:0007669"/>
    <property type="project" value="UniProtKB-ARBA"/>
</dbReference>
<dbReference type="GO" id="GO:0033842">
    <property type="term" value="F:N-acetyl-beta-glucosaminyl-derivative 4-beta-N-acetylgalactosaminyltransferase activity"/>
    <property type="evidence" value="ECO:0007669"/>
    <property type="project" value="UniProtKB-EC"/>
</dbReference>
<dbReference type="FunFam" id="3.90.550.10:FF:000063">
    <property type="entry name" value="Beta-1,4-N-acetylgalactosaminyltransferase"/>
    <property type="match status" value="1"/>
</dbReference>
<dbReference type="Gene3D" id="3.90.550.10">
    <property type="entry name" value="Spore Coat Polysaccharide Biosynthesis Protein SpsA, Chain A"/>
    <property type="match status" value="1"/>
</dbReference>
<dbReference type="InterPro" id="IPR008428">
    <property type="entry name" value="Chond_GalNAc"/>
</dbReference>
<dbReference type="InterPro" id="IPR051227">
    <property type="entry name" value="CS_glycosyltransferase"/>
</dbReference>
<dbReference type="InterPro" id="IPR029044">
    <property type="entry name" value="Nucleotide-diphossugar_trans"/>
</dbReference>
<dbReference type="InterPro" id="IPR037524">
    <property type="entry name" value="PA14/GLEYA"/>
</dbReference>
<dbReference type="InterPro" id="IPR011658">
    <property type="entry name" value="PA14_dom"/>
</dbReference>
<dbReference type="PANTHER" id="PTHR12369:SF15">
    <property type="entry name" value="BETA-1,4-N-ACETYLGALACTOSAMINYLTRANSFERASE 3"/>
    <property type="match status" value="1"/>
</dbReference>
<dbReference type="PANTHER" id="PTHR12369">
    <property type="entry name" value="CHONDROITIN SYNTHASE"/>
    <property type="match status" value="1"/>
</dbReference>
<dbReference type="Pfam" id="PF05679">
    <property type="entry name" value="CHGN"/>
    <property type="match status" value="1"/>
</dbReference>
<dbReference type="SMART" id="SM00758">
    <property type="entry name" value="PA14"/>
    <property type="match status" value="1"/>
</dbReference>
<dbReference type="SUPFAM" id="SSF53448">
    <property type="entry name" value="Nucleotide-diphospho-sugar transferases"/>
    <property type="match status" value="1"/>
</dbReference>
<dbReference type="PROSITE" id="PS51820">
    <property type="entry name" value="PA14"/>
    <property type="match status" value="1"/>
</dbReference>
<evidence type="ECO:0000250" key="1"/>
<evidence type="ECO:0000255" key="2"/>
<evidence type="ECO:0000255" key="3">
    <source>
        <dbReference type="PROSITE-ProRule" id="PRU01164"/>
    </source>
</evidence>
<evidence type="ECO:0000256" key="4">
    <source>
        <dbReference type="SAM" id="MobiDB-lite"/>
    </source>
</evidence>
<evidence type="ECO:0000305" key="5"/>